<keyword id="KW-0028">Amino-acid biosynthesis</keyword>
<keyword id="KW-0055">Arginine biosynthesis</keyword>
<keyword id="KW-0067">ATP-binding</keyword>
<keyword id="KW-0315">Glutamine amidotransferase</keyword>
<keyword id="KW-0436">Ligase</keyword>
<keyword id="KW-0547">Nucleotide-binding</keyword>
<keyword id="KW-0665">Pyrimidine biosynthesis</keyword>
<keyword id="KW-1185">Reference proteome</keyword>
<feature type="chain" id="PRO_0000112282" description="Carbamoyl phosphate synthase small chain">
    <location>
        <begin position="1"/>
        <end position="375"/>
    </location>
</feature>
<feature type="domain" description="Glutamine amidotransferase type-1" evidence="1">
    <location>
        <begin position="188"/>
        <end position="375"/>
    </location>
</feature>
<feature type="region of interest" description="CPSase" evidence="1">
    <location>
        <begin position="1"/>
        <end position="184"/>
    </location>
</feature>
<feature type="active site" description="Nucleophile" evidence="1">
    <location>
        <position position="268"/>
    </location>
</feature>
<feature type="active site" evidence="1">
    <location>
        <position position="351"/>
    </location>
</feature>
<feature type="active site" evidence="1">
    <location>
        <position position="353"/>
    </location>
</feature>
<feature type="binding site" evidence="1">
    <location>
        <position position="44"/>
    </location>
    <ligand>
        <name>L-glutamine</name>
        <dbReference type="ChEBI" id="CHEBI:58359"/>
    </ligand>
</feature>
<feature type="binding site" evidence="1">
    <location>
        <position position="240"/>
    </location>
    <ligand>
        <name>L-glutamine</name>
        <dbReference type="ChEBI" id="CHEBI:58359"/>
    </ligand>
</feature>
<feature type="binding site" evidence="1">
    <location>
        <position position="242"/>
    </location>
    <ligand>
        <name>L-glutamine</name>
        <dbReference type="ChEBI" id="CHEBI:58359"/>
    </ligand>
</feature>
<feature type="binding site" evidence="1">
    <location>
        <position position="269"/>
    </location>
    <ligand>
        <name>L-glutamine</name>
        <dbReference type="ChEBI" id="CHEBI:58359"/>
    </ligand>
</feature>
<feature type="binding site" evidence="1">
    <location>
        <position position="272"/>
    </location>
    <ligand>
        <name>L-glutamine</name>
        <dbReference type="ChEBI" id="CHEBI:58359"/>
    </ligand>
</feature>
<feature type="binding site" evidence="1">
    <location>
        <position position="310"/>
    </location>
    <ligand>
        <name>L-glutamine</name>
        <dbReference type="ChEBI" id="CHEBI:58359"/>
    </ligand>
</feature>
<feature type="binding site" evidence="1">
    <location>
        <position position="313"/>
    </location>
    <ligand>
        <name>L-glutamine</name>
        <dbReference type="ChEBI" id="CHEBI:58359"/>
    </ligand>
</feature>
<reference key="1">
    <citation type="journal article" date="1997" name="Nature">
        <title>The complete genome sequence of the gastric pathogen Helicobacter pylori.</title>
        <authorList>
            <person name="Tomb J.-F."/>
            <person name="White O."/>
            <person name="Kerlavage A.R."/>
            <person name="Clayton R.A."/>
            <person name="Sutton G.G."/>
            <person name="Fleischmann R.D."/>
            <person name="Ketchum K.A."/>
            <person name="Klenk H.-P."/>
            <person name="Gill S.R."/>
            <person name="Dougherty B.A."/>
            <person name="Nelson K.E."/>
            <person name="Quackenbush J."/>
            <person name="Zhou L."/>
            <person name="Kirkness E.F."/>
            <person name="Peterson S.N."/>
            <person name="Loftus B.J."/>
            <person name="Richardson D.L."/>
            <person name="Dodson R.J."/>
            <person name="Khalak H.G."/>
            <person name="Glodek A."/>
            <person name="McKenney K."/>
            <person name="FitzGerald L.M."/>
            <person name="Lee N."/>
            <person name="Adams M.D."/>
            <person name="Hickey E.K."/>
            <person name="Berg D.E."/>
            <person name="Gocayne J.D."/>
            <person name="Utterback T.R."/>
            <person name="Peterson J.D."/>
            <person name="Kelley J.M."/>
            <person name="Cotton M.D."/>
            <person name="Weidman J.F."/>
            <person name="Fujii C."/>
            <person name="Bowman C."/>
            <person name="Watthey L."/>
            <person name="Wallin E."/>
            <person name="Hayes W.S."/>
            <person name="Borodovsky M."/>
            <person name="Karp P.D."/>
            <person name="Smith H.O."/>
            <person name="Fraser C.M."/>
            <person name="Venter J.C."/>
        </authorList>
    </citation>
    <scope>NUCLEOTIDE SEQUENCE [LARGE SCALE GENOMIC DNA]</scope>
    <source>
        <strain>ATCC 700392 / 26695</strain>
    </source>
</reference>
<comment type="function">
    <text evidence="1">Small subunit of the glutamine-dependent carbamoyl phosphate synthetase (CPSase). CPSase catalyzes the formation of carbamoyl phosphate from the ammonia moiety of glutamine, carbonate, and phosphate donated by ATP, constituting the first step of 2 biosynthetic pathways, one leading to arginine and/or urea and the other to pyrimidine nucleotides. The small subunit (glutamine amidotransferase) binds and cleaves glutamine to supply the large subunit with the substrate ammonia.</text>
</comment>
<comment type="catalytic activity">
    <reaction evidence="1">
        <text>hydrogencarbonate + L-glutamine + 2 ATP + H2O = carbamoyl phosphate + L-glutamate + 2 ADP + phosphate + 2 H(+)</text>
        <dbReference type="Rhea" id="RHEA:18633"/>
        <dbReference type="ChEBI" id="CHEBI:15377"/>
        <dbReference type="ChEBI" id="CHEBI:15378"/>
        <dbReference type="ChEBI" id="CHEBI:17544"/>
        <dbReference type="ChEBI" id="CHEBI:29985"/>
        <dbReference type="ChEBI" id="CHEBI:30616"/>
        <dbReference type="ChEBI" id="CHEBI:43474"/>
        <dbReference type="ChEBI" id="CHEBI:58228"/>
        <dbReference type="ChEBI" id="CHEBI:58359"/>
        <dbReference type="ChEBI" id="CHEBI:456216"/>
        <dbReference type="EC" id="6.3.5.5"/>
    </reaction>
</comment>
<comment type="catalytic activity">
    <molecule>Carbamoyl phosphate synthase small chain</molecule>
    <reaction evidence="1">
        <text>L-glutamine + H2O = L-glutamate + NH4(+)</text>
        <dbReference type="Rhea" id="RHEA:15889"/>
        <dbReference type="ChEBI" id="CHEBI:15377"/>
        <dbReference type="ChEBI" id="CHEBI:28938"/>
        <dbReference type="ChEBI" id="CHEBI:29985"/>
        <dbReference type="ChEBI" id="CHEBI:58359"/>
    </reaction>
</comment>
<comment type="pathway">
    <text evidence="1">Amino-acid biosynthesis; L-arginine biosynthesis; carbamoyl phosphate from bicarbonate: step 1/1.</text>
</comment>
<comment type="pathway">
    <text evidence="1">Pyrimidine metabolism; UMP biosynthesis via de novo pathway; (S)-dihydroorotate from bicarbonate: step 1/3.</text>
</comment>
<comment type="subunit">
    <text evidence="1">Composed of two chains; the small (or glutamine) chain promotes the hydrolysis of glutamine to ammonia, which is used by the large (or ammonia) chain to synthesize carbamoyl phosphate. Tetramer of heterodimers (alpha,beta)4.</text>
</comment>
<comment type="similarity">
    <text evidence="1">Belongs to the CarA family.</text>
</comment>
<protein>
    <recommendedName>
        <fullName evidence="1">Carbamoyl phosphate synthase small chain</fullName>
        <ecNumber evidence="1">6.3.5.5</ecNumber>
    </recommendedName>
    <alternativeName>
        <fullName evidence="1">Carbamoyl phosphate synthetase glutamine chain</fullName>
    </alternativeName>
</protein>
<evidence type="ECO:0000255" key="1">
    <source>
        <dbReference type="HAMAP-Rule" id="MF_01209"/>
    </source>
</evidence>
<dbReference type="EC" id="6.3.5.5" evidence="1"/>
<dbReference type="EMBL" id="AE000511">
    <property type="protein sequence ID" value="AAD08282.1"/>
    <property type="molecule type" value="Genomic_DNA"/>
</dbReference>
<dbReference type="PIR" id="E64674">
    <property type="entry name" value="E64674"/>
</dbReference>
<dbReference type="RefSeq" id="NP_208029.1">
    <property type="nucleotide sequence ID" value="NC_000915.1"/>
</dbReference>
<dbReference type="RefSeq" id="WP_000254171.1">
    <property type="nucleotide sequence ID" value="NC_018939.1"/>
</dbReference>
<dbReference type="SMR" id="O25835"/>
<dbReference type="DIP" id="DIP-3716N"/>
<dbReference type="FunCoup" id="O25835">
    <property type="interactions" value="398"/>
</dbReference>
<dbReference type="IntAct" id="O25835">
    <property type="interactions" value="2"/>
</dbReference>
<dbReference type="MINT" id="O25835"/>
<dbReference type="STRING" id="85962.HP_1237"/>
<dbReference type="PaxDb" id="85962-C694_06385"/>
<dbReference type="EnsemblBacteria" id="AAD08282">
    <property type="protein sequence ID" value="AAD08282"/>
    <property type="gene ID" value="HP_1237"/>
</dbReference>
<dbReference type="KEGG" id="heo:C694_06385"/>
<dbReference type="KEGG" id="hpy:HP_1237"/>
<dbReference type="PATRIC" id="fig|85962.47.peg.1325"/>
<dbReference type="eggNOG" id="COG0505">
    <property type="taxonomic scope" value="Bacteria"/>
</dbReference>
<dbReference type="InParanoid" id="O25835"/>
<dbReference type="OrthoDB" id="9804328at2"/>
<dbReference type="PhylomeDB" id="O25835"/>
<dbReference type="UniPathway" id="UPA00068">
    <property type="reaction ID" value="UER00171"/>
</dbReference>
<dbReference type="UniPathway" id="UPA00070">
    <property type="reaction ID" value="UER00115"/>
</dbReference>
<dbReference type="Proteomes" id="UP000000429">
    <property type="component" value="Chromosome"/>
</dbReference>
<dbReference type="GO" id="GO:0005524">
    <property type="term" value="F:ATP binding"/>
    <property type="evidence" value="ECO:0007669"/>
    <property type="project" value="UniProtKB-UniRule"/>
</dbReference>
<dbReference type="GO" id="GO:0004088">
    <property type="term" value="F:carbamoyl-phosphate synthase (glutamine-hydrolyzing) activity"/>
    <property type="evidence" value="ECO:0007669"/>
    <property type="project" value="UniProtKB-UniRule"/>
</dbReference>
<dbReference type="GO" id="GO:0004359">
    <property type="term" value="F:glutaminase activity"/>
    <property type="evidence" value="ECO:0007669"/>
    <property type="project" value="RHEA"/>
</dbReference>
<dbReference type="GO" id="GO:0006207">
    <property type="term" value="P:'de novo' pyrimidine nucleobase biosynthetic process"/>
    <property type="evidence" value="ECO:0007669"/>
    <property type="project" value="InterPro"/>
</dbReference>
<dbReference type="GO" id="GO:0044205">
    <property type="term" value="P:'de novo' UMP biosynthetic process"/>
    <property type="evidence" value="ECO:0007669"/>
    <property type="project" value="UniProtKB-UniRule"/>
</dbReference>
<dbReference type="GO" id="GO:0006541">
    <property type="term" value="P:glutamine metabolic process"/>
    <property type="evidence" value="ECO:0007669"/>
    <property type="project" value="InterPro"/>
</dbReference>
<dbReference type="GO" id="GO:0006526">
    <property type="term" value="P:L-arginine biosynthetic process"/>
    <property type="evidence" value="ECO:0007669"/>
    <property type="project" value="UniProtKB-UniRule"/>
</dbReference>
<dbReference type="CDD" id="cd01744">
    <property type="entry name" value="GATase1_CPSase"/>
    <property type="match status" value="1"/>
</dbReference>
<dbReference type="Gene3D" id="3.40.50.880">
    <property type="match status" value="1"/>
</dbReference>
<dbReference type="Gene3D" id="3.50.30.20">
    <property type="entry name" value="Carbamoyl-phosphate synthase small subunit, N-terminal domain"/>
    <property type="match status" value="1"/>
</dbReference>
<dbReference type="HAMAP" id="MF_01209">
    <property type="entry name" value="CPSase_S_chain"/>
    <property type="match status" value="1"/>
</dbReference>
<dbReference type="InterPro" id="IPR050472">
    <property type="entry name" value="Anth_synth/Amidotransfase"/>
</dbReference>
<dbReference type="InterPro" id="IPR006274">
    <property type="entry name" value="CarbamoylP_synth_ssu"/>
</dbReference>
<dbReference type="InterPro" id="IPR002474">
    <property type="entry name" value="CarbamoylP_synth_ssu_N"/>
</dbReference>
<dbReference type="InterPro" id="IPR036480">
    <property type="entry name" value="CarbP_synth_ssu_N_sf"/>
</dbReference>
<dbReference type="InterPro" id="IPR029062">
    <property type="entry name" value="Class_I_gatase-like"/>
</dbReference>
<dbReference type="InterPro" id="IPR035686">
    <property type="entry name" value="CPSase_GATase1"/>
</dbReference>
<dbReference type="InterPro" id="IPR017926">
    <property type="entry name" value="GATASE"/>
</dbReference>
<dbReference type="NCBIfam" id="TIGR01368">
    <property type="entry name" value="CPSaseIIsmall"/>
    <property type="match status" value="1"/>
</dbReference>
<dbReference type="NCBIfam" id="NF009475">
    <property type="entry name" value="PRK12838.1"/>
    <property type="match status" value="1"/>
</dbReference>
<dbReference type="PANTHER" id="PTHR43418:SF7">
    <property type="entry name" value="CARBAMOYL-PHOSPHATE SYNTHASE SMALL CHAIN"/>
    <property type="match status" value="1"/>
</dbReference>
<dbReference type="PANTHER" id="PTHR43418">
    <property type="entry name" value="MULTIFUNCTIONAL TRYPTOPHAN BIOSYNTHESIS PROTEIN-RELATED"/>
    <property type="match status" value="1"/>
</dbReference>
<dbReference type="Pfam" id="PF00988">
    <property type="entry name" value="CPSase_sm_chain"/>
    <property type="match status" value="1"/>
</dbReference>
<dbReference type="Pfam" id="PF00117">
    <property type="entry name" value="GATase"/>
    <property type="match status" value="1"/>
</dbReference>
<dbReference type="PRINTS" id="PR00097">
    <property type="entry name" value="ANTSNTHASEII"/>
</dbReference>
<dbReference type="PRINTS" id="PR00099">
    <property type="entry name" value="CPSGATASE"/>
</dbReference>
<dbReference type="PRINTS" id="PR00096">
    <property type="entry name" value="GATASE"/>
</dbReference>
<dbReference type="SMART" id="SM01097">
    <property type="entry name" value="CPSase_sm_chain"/>
    <property type="match status" value="1"/>
</dbReference>
<dbReference type="SUPFAM" id="SSF52021">
    <property type="entry name" value="Carbamoyl phosphate synthetase, small subunit N-terminal domain"/>
    <property type="match status" value="1"/>
</dbReference>
<dbReference type="SUPFAM" id="SSF52317">
    <property type="entry name" value="Class I glutamine amidotransferase-like"/>
    <property type="match status" value="1"/>
</dbReference>
<dbReference type="PROSITE" id="PS51273">
    <property type="entry name" value="GATASE_TYPE_1"/>
    <property type="match status" value="1"/>
</dbReference>
<proteinExistence type="inferred from homology"/>
<gene>
    <name evidence="1" type="primary">carA</name>
    <name type="ordered locus">HP_1237</name>
</gene>
<organism>
    <name type="scientific">Helicobacter pylori (strain ATCC 700392 / 26695)</name>
    <name type="common">Campylobacter pylori</name>
    <dbReference type="NCBI Taxonomy" id="85962"/>
    <lineage>
        <taxon>Bacteria</taxon>
        <taxon>Pseudomonadati</taxon>
        <taxon>Campylobacterota</taxon>
        <taxon>Epsilonproteobacteria</taxon>
        <taxon>Campylobacterales</taxon>
        <taxon>Helicobacteraceae</taxon>
        <taxon>Helicobacter</taxon>
    </lineage>
</organism>
<sequence length="375" mass="41636">MVSLYLENGLFLQAQSFGASGTQAGELVFNTSMSGYQEVISDPSYKGQFVVFSMPEIGVVGANSKDDESFFSCAGVLARHYNEFFSNSRADFSLSAYLKERGVLGVCGVDTRSLIKTLRHHGCLMMVASTIEHDKNKLEEILKNAPKISHSPLVSSVSTPKITTHQRATFDFKTLDYKPFDEKTSHKIIAVLDFGAKGNILNELQNVGLKALIYPHHTKASELIKAYEKKEISGIFLSNGPGDPLSLQQEIGEIKQLINAKIPMLGICLGHQLLSIAQGYPTYKLKFGHHGSNHPVKNLKTNAVEITAQNHNYCVPEDIEEIAIITHRNLFDNTIEGVRYKNAPIISVQHHPESSPGPKESHYIFKEFVELLKDF</sequence>
<accession>O25835</accession>
<name>CARA_HELPY</name>